<feature type="chain" id="PRO_1000000894" description="Adenylosuccinate synthetase">
    <location>
        <begin position="1"/>
        <end position="430"/>
    </location>
</feature>
<feature type="active site" description="Proton acceptor" evidence="1">
    <location>
        <position position="14"/>
    </location>
</feature>
<feature type="active site" description="Proton donor" evidence="1">
    <location>
        <position position="42"/>
    </location>
</feature>
<feature type="binding site" evidence="1">
    <location>
        <begin position="13"/>
        <end position="19"/>
    </location>
    <ligand>
        <name>GTP</name>
        <dbReference type="ChEBI" id="CHEBI:37565"/>
    </ligand>
</feature>
<feature type="binding site" description="in other chain" evidence="1">
    <location>
        <begin position="14"/>
        <end position="17"/>
    </location>
    <ligand>
        <name>IMP</name>
        <dbReference type="ChEBI" id="CHEBI:58053"/>
        <note>ligand shared between dimeric partners</note>
    </ligand>
</feature>
<feature type="binding site" evidence="1">
    <location>
        <position position="14"/>
    </location>
    <ligand>
        <name>Mg(2+)</name>
        <dbReference type="ChEBI" id="CHEBI:18420"/>
    </ligand>
</feature>
<feature type="binding site" description="in other chain" evidence="1">
    <location>
        <begin position="39"/>
        <end position="42"/>
    </location>
    <ligand>
        <name>IMP</name>
        <dbReference type="ChEBI" id="CHEBI:58053"/>
        <note>ligand shared between dimeric partners</note>
    </ligand>
</feature>
<feature type="binding site" evidence="1">
    <location>
        <begin position="41"/>
        <end position="43"/>
    </location>
    <ligand>
        <name>GTP</name>
        <dbReference type="ChEBI" id="CHEBI:37565"/>
    </ligand>
</feature>
<feature type="binding site" evidence="1">
    <location>
        <position position="41"/>
    </location>
    <ligand>
        <name>Mg(2+)</name>
        <dbReference type="ChEBI" id="CHEBI:18420"/>
    </ligand>
</feature>
<feature type="binding site" description="in other chain" evidence="1">
    <location>
        <position position="130"/>
    </location>
    <ligand>
        <name>IMP</name>
        <dbReference type="ChEBI" id="CHEBI:58053"/>
        <note>ligand shared between dimeric partners</note>
    </ligand>
</feature>
<feature type="binding site" evidence="1">
    <location>
        <position position="144"/>
    </location>
    <ligand>
        <name>IMP</name>
        <dbReference type="ChEBI" id="CHEBI:58053"/>
        <note>ligand shared between dimeric partners</note>
    </ligand>
</feature>
<feature type="binding site" description="in other chain" evidence="1">
    <location>
        <position position="225"/>
    </location>
    <ligand>
        <name>IMP</name>
        <dbReference type="ChEBI" id="CHEBI:58053"/>
        <note>ligand shared between dimeric partners</note>
    </ligand>
</feature>
<feature type="binding site" description="in other chain" evidence="1">
    <location>
        <position position="240"/>
    </location>
    <ligand>
        <name>IMP</name>
        <dbReference type="ChEBI" id="CHEBI:58053"/>
        <note>ligand shared between dimeric partners</note>
    </ligand>
</feature>
<feature type="binding site" evidence="1">
    <location>
        <begin position="300"/>
        <end position="306"/>
    </location>
    <ligand>
        <name>substrate</name>
    </ligand>
</feature>
<feature type="binding site" description="in other chain" evidence="1">
    <location>
        <position position="304"/>
    </location>
    <ligand>
        <name>IMP</name>
        <dbReference type="ChEBI" id="CHEBI:58053"/>
        <note>ligand shared between dimeric partners</note>
    </ligand>
</feature>
<feature type="binding site" evidence="1">
    <location>
        <position position="306"/>
    </location>
    <ligand>
        <name>GTP</name>
        <dbReference type="ChEBI" id="CHEBI:37565"/>
    </ligand>
</feature>
<feature type="binding site" evidence="1">
    <location>
        <begin position="332"/>
        <end position="334"/>
    </location>
    <ligand>
        <name>GTP</name>
        <dbReference type="ChEBI" id="CHEBI:37565"/>
    </ligand>
</feature>
<feature type="binding site" evidence="1">
    <location>
        <begin position="414"/>
        <end position="416"/>
    </location>
    <ligand>
        <name>GTP</name>
        <dbReference type="ChEBI" id="CHEBI:37565"/>
    </ligand>
</feature>
<protein>
    <recommendedName>
        <fullName evidence="1">Adenylosuccinate synthetase</fullName>
        <shortName evidence="1">AMPSase</shortName>
        <shortName evidence="1">AdSS</shortName>
        <ecNumber evidence="1">6.3.4.4</ecNumber>
    </recommendedName>
    <alternativeName>
        <fullName evidence="1">IMP--aspartate ligase</fullName>
    </alternativeName>
</protein>
<gene>
    <name evidence="1" type="primary">purA</name>
    <name type="ordered locus">PSPA7_5667</name>
</gene>
<sequence>MGKNVVVLGTQWGDEGKGKIVDLLTEQAAAVVRYQGGHNAGHTLVIDGEKTVLHLIPSGILREGVQCLIGNGVVLAPDALLREITKLEEKGVPVRERLRISPSCPLILSYHVALDQAREKARGEAKIGTTGRGIGPAYEDKVARRGLRVGDLFHRERFAAKLGELLDYHNFVLQHYYKEPAIDFQKTLDEAMEYAELLKPMMADVAATLHDLRKHGKDIMFEGAQGSLLDIDHGTYPYVTSSNTTAGGTATGSGFGPLYLDYVLGITKAYTTRVGSGPFPTELFDDVGAYLAKRGHEFGATTGRARRCGWFDAVILRRAIEINSISGLCLTKLDVLDGLDVVRLCVGYRNADGDVLEAPTDADSYIGLQPVYEEMPGWSESTVGAKTLEELPANARAYIKRVEELVGAPIDIISTGPDRNETIILRHPFA</sequence>
<name>PURA_PSEP7</name>
<comment type="function">
    <text evidence="1">Plays an important role in the de novo pathway of purine nucleotide biosynthesis. Catalyzes the first committed step in the biosynthesis of AMP from IMP.</text>
</comment>
<comment type="catalytic activity">
    <reaction evidence="1">
        <text>IMP + L-aspartate + GTP = N(6)-(1,2-dicarboxyethyl)-AMP + GDP + phosphate + 2 H(+)</text>
        <dbReference type="Rhea" id="RHEA:15753"/>
        <dbReference type="ChEBI" id="CHEBI:15378"/>
        <dbReference type="ChEBI" id="CHEBI:29991"/>
        <dbReference type="ChEBI" id="CHEBI:37565"/>
        <dbReference type="ChEBI" id="CHEBI:43474"/>
        <dbReference type="ChEBI" id="CHEBI:57567"/>
        <dbReference type="ChEBI" id="CHEBI:58053"/>
        <dbReference type="ChEBI" id="CHEBI:58189"/>
        <dbReference type="EC" id="6.3.4.4"/>
    </reaction>
</comment>
<comment type="cofactor">
    <cofactor evidence="1">
        <name>Mg(2+)</name>
        <dbReference type="ChEBI" id="CHEBI:18420"/>
    </cofactor>
    <text evidence="1">Binds 1 Mg(2+) ion per subunit.</text>
</comment>
<comment type="pathway">
    <text evidence="1">Purine metabolism; AMP biosynthesis via de novo pathway; AMP from IMP: step 1/2.</text>
</comment>
<comment type="subunit">
    <text evidence="1">Homodimer.</text>
</comment>
<comment type="subcellular location">
    <subcellularLocation>
        <location evidence="1">Cytoplasm</location>
    </subcellularLocation>
</comment>
<comment type="similarity">
    <text evidence="1">Belongs to the adenylosuccinate synthetase family.</text>
</comment>
<proteinExistence type="inferred from homology"/>
<organism>
    <name type="scientific">Pseudomonas paraeruginosa (strain DSM 24068 / PA7)</name>
    <name type="common">Pseudomonas aeruginosa (strain PA7)</name>
    <dbReference type="NCBI Taxonomy" id="381754"/>
    <lineage>
        <taxon>Bacteria</taxon>
        <taxon>Pseudomonadati</taxon>
        <taxon>Pseudomonadota</taxon>
        <taxon>Gammaproteobacteria</taxon>
        <taxon>Pseudomonadales</taxon>
        <taxon>Pseudomonadaceae</taxon>
        <taxon>Pseudomonas</taxon>
        <taxon>Pseudomonas paraeruginosa</taxon>
    </lineage>
</organism>
<dbReference type="EC" id="6.3.4.4" evidence="1"/>
<dbReference type="EMBL" id="CP000744">
    <property type="protein sequence ID" value="ABR83792.1"/>
    <property type="molecule type" value="Genomic_DNA"/>
</dbReference>
<dbReference type="RefSeq" id="WP_012077630.1">
    <property type="nucleotide sequence ID" value="NC_009656.1"/>
</dbReference>
<dbReference type="SMR" id="A6VD51"/>
<dbReference type="GeneID" id="77223487"/>
<dbReference type="KEGG" id="pap:PSPA7_5667"/>
<dbReference type="HOGENOM" id="CLU_029848_0_0_6"/>
<dbReference type="UniPathway" id="UPA00075">
    <property type="reaction ID" value="UER00335"/>
</dbReference>
<dbReference type="Proteomes" id="UP000001582">
    <property type="component" value="Chromosome"/>
</dbReference>
<dbReference type="GO" id="GO:0005737">
    <property type="term" value="C:cytoplasm"/>
    <property type="evidence" value="ECO:0007669"/>
    <property type="project" value="UniProtKB-SubCell"/>
</dbReference>
<dbReference type="GO" id="GO:0004019">
    <property type="term" value="F:adenylosuccinate synthase activity"/>
    <property type="evidence" value="ECO:0007669"/>
    <property type="project" value="UniProtKB-UniRule"/>
</dbReference>
<dbReference type="GO" id="GO:0005525">
    <property type="term" value="F:GTP binding"/>
    <property type="evidence" value="ECO:0007669"/>
    <property type="project" value="UniProtKB-UniRule"/>
</dbReference>
<dbReference type="GO" id="GO:0000287">
    <property type="term" value="F:magnesium ion binding"/>
    <property type="evidence" value="ECO:0007669"/>
    <property type="project" value="UniProtKB-UniRule"/>
</dbReference>
<dbReference type="GO" id="GO:0044208">
    <property type="term" value="P:'de novo' AMP biosynthetic process"/>
    <property type="evidence" value="ECO:0007669"/>
    <property type="project" value="UniProtKB-UniRule"/>
</dbReference>
<dbReference type="GO" id="GO:0046040">
    <property type="term" value="P:IMP metabolic process"/>
    <property type="evidence" value="ECO:0007669"/>
    <property type="project" value="TreeGrafter"/>
</dbReference>
<dbReference type="CDD" id="cd03108">
    <property type="entry name" value="AdSS"/>
    <property type="match status" value="1"/>
</dbReference>
<dbReference type="FunFam" id="1.10.300.10:FF:000001">
    <property type="entry name" value="Adenylosuccinate synthetase"/>
    <property type="match status" value="1"/>
</dbReference>
<dbReference type="FunFam" id="3.90.170.10:FF:000001">
    <property type="entry name" value="Adenylosuccinate synthetase"/>
    <property type="match status" value="1"/>
</dbReference>
<dbReference type="Gene3D" id="3.40.440.10">
    <property type="entry name" value="Adenylosuccinate Synthetase, subunit A, domain 1"/>
    <property type="match status" value="1"/>
</dbReference>
<dbReference type="Gene3D" id="1.10.300.10">
    <property type="entry name" value="Adenylosuccinate Synthetase, subunit A, domain 2"/>
    <property type="match status" value="1"/>
</dbReference>
<dbReference type="Gene3D" id="3.90.170.10">
    <property type="entry name" value="Adenylosuccinate Synthetase, subunit A, domain 3"/>
    <property type="match status" value="1"/>
</dbReference>
<dbReference type="HAMAP" id="MF_00011">
    <property type="entry name" value="Adenylosucc_synth"/>
    <property type="match status" value="1"/>
</dbReference>
<dbReference type="InterPro" id="IPR018220">
    <property type="entry name" value="Adenylosuccin_syn_GTP-bd"/>
</dbReference>
<dbReference type="InterPro" id="IPR033128">
    <property type="entry name" value="Adenylosuccin_syn_Lys_AS"/>
</dbReference>
<dbReference type="InterPro" id="IPR042109">
    <property type="entry name" value="Adenylosuccinate_synth_dom1"/>
</dbReference>
<dbReference type="InterPro" id="IPR042110">
    <property type="entry name" value="Adenylosuccinate_synth_dom2"/>
</dbReference>
<dbReference type="InterPro" id="IPR042111">
    <property type="entry name" value="Adenylosuccinate_synth_dom3"/>
</dbReference>
<dbReference type="InterPro" id="IPR001114">
    <property type="entry name" value="Adenylosuccinate_synthetase"/>
</dbReference>
<dbReference type="InterPro" id="IPR027417">
    <property type="entry name" value="P-loop_NTPase"/>
</dbReference>
<dbReference type="NCBIfam" id="NF002223">
    <property type="entry name" value="PRK01117.1"/>
    <property type="match status" value="1"/>
</dbReference>
<dbReference type="NCBIfam" id="TIGR00184">
    <property type="entry name" value="purA"/>
    <property type="match status" value="1"/>
</dbReference>
<dbReference type="PANTHER" id="PTHR11846">
    <property type="entry name" value="ADENYLOSUCCINATE SYNTHETASE"/>
    <property type="match status" value="1"/>
</dbReference>
<dbReference type="PANTHER" id="PTHR11846:SF0">
    <property type="entry name" value="ADENYLOSUCCINATE SYNTHETASE"/>
    <property type="match status" value="1"/>
</dbReference>
<dbReference type="Pfam" id="PF00709">
    <property type="entry name" value="Adenylsucc_synt"/>
    <property type="match status" value="1"/>
</dbReference>
<dbReference type="SMART" id="SM00788">
    <property type="entry name" value="Adenylsucc_synt"/>
    <property type="match status" value="1"/>
</dbReference>
<dbReference type="SUPFAM" id="SSF52540">
    <property type="entry name" value="P-loop containing nucleoside triphosphate hydrolases"/>
    <property type="match status" value="1"/>
</dbReference>
<dbReference type="PROSITE" id="PS01266">
    <property type="entry name" value="ADENYLOSUCCIN_SYN_1"/>
    <property type="match status" value="1"/>
</dbReference>
<dbReference type="PROSITE" id="PS00513">
    <property type="entry name" value="ADENYLOSUCCIN_SYN_2"/>
    <property type="match status" value="1"/>
</dbReference>
<reference key="1">
    <citation type="submission" date="2007-06" db="EMBL/GenBank/DDBJ databases">
        <authorList>
            <person name="Dodson R.J."/>
            <person name="Harkins D."/>
            <person name="Paulsen I.T."/>
        </authorList>
    </citation>
    <scope>NUCLEOTIDE SEQUENCE [LARGE SCALE GENOMIC DNA]</scope>
    <source>
        <strain>DSM 24068 / PA7</strain>
    </source>
</reference>
<keyword id="KW-0963">Cytoplasm</keyword>
<keyword id="KW-0342">GTP-binding</keyword>
<keyword id="KW-0436">Ligase</keyword>
<keyword id="KW-0460">Magnesium</keyword>
<keyword id="KW-0479">Metal-binding</keyword>
<keyword id="KW-0547">Nucleotide-binding</keyword>
<keyword id="KW-0658">Purine biosynthesis</keyword>
<accession>A6VD51</accession>
<evidence type="ECO:0000255" key="1">
    <source>
        <dbReference type="HAMAP-Rule" id="MF_00011"/>
    </source>
</evidence>